<comment type="function">
    <text evidence="1">IF-3 binds to the 30S ribosomal subunit and shifts the equilibrium between 70S ribosomes and their 50S and 30S subunits in favor of the free subunits, thus enhancing the availability of 30S subunits on which protein synthesis initiation begins.</text>
</comment>
<comment type="subunit">
    <text evidence="1">Monomer.</text>
</comment>
<comment type="subcellular location">
    <subcellularLocation>
        <location evidence="1">Cytoplasm</location>
    </subcellularLocation>
</comment>
<comment type="similarity">
    <text evidence="1">Belongs to the IF-3 family.</text>
</comment>
<gene>
    <name evidence="1" type="primary">infC</name>
    <name type="ordered locus">SO_2300</name>
</gene>
<keyword id="KW-0963">Cytoplasm</keyword>
<keyword id="KW-0396">Initiation factor</keyword>
<keyword id="KW-0648">Protein biosynthesis</keyword>
<keyword id="KW-1185">Reference proteome</keyword>
<feature type="chain" id="PRO_0000177573" description="Translation initiation factor IF-3">
    <location>
        <begin position="1"/>
        <end position="180"/>
    </location>
</feature>
<dbReference type="EMBL" id="AE014299">
    <property type="protein sequence ID" value="AAN55340.2"/>
    <property type="molecule type" value="Genomic_DNA"/>
</dbReference>
<dbReference type="RefSeq" id="NP_717896.2">
    <property type="nucleotide sequence ID" value="NC_004347.2"/>
</dbReference>
<dbReference type="RefSeq" id="WP_011072302.1">
    <property type="nucleotide sequence ID" value="NZ_CP053946.1"/>
</dbReference>
<dbReference type="SMR" id="Q8EER8"/>
<dbReference type="STRING" id="211586.SO_2300"/>
<dbReference type="PaxDb" id="211586-SO_2300"/>
<dbReference type="GeneID" id="75188902"/>
<dbReference type="KEGG" id="son:SO_2300"/>
<dbReference type="PATRIC" id="fig|211586.12.peg.2215"/>
<dbReference type="eggNOG" id="COG0290">
    <property type="taxonomic scope" value="Bacteria"/>
</dbReference>
<dbReference type="HOGENOM" id="CLU_054919_3_2_6"/>
<dbReference type="OrthoDB" id="9806014at2"/>
<dbReference type="PhylomeDB" id="Q8EER8"/>
<dbReference type="BioCyc" id="SONE211586:G1GMP-2102-MONOMER"/>
<dbReference type="Proteomes" id="UP000008186">
    <property type="component" value="Chromosome"/>
</dbReference>
<dbReference type="GO" id="GO:0005829">
    <property type="term" value="C:cytosol"/>
    <property type="evidence" value="ECO:0000318"/>
    <property type="project" value="GO_Central"/>
</dbReference>
<dbReference type="GO" id="GO:0043022">
    <property type="term" value="F:ribosome binding"/>
    <property type="evidence" value="ECO:0000318"/>
    <property type="project" value="GO_Central"/>
</dbReference>
<dbReference type="GO" id="GO:0003743">
    <property type="term" value="F:translation initiation factor activity"/>
    <property type="evidence" value="ECO:0000318"/>
    <property type="project" value="GO_Central"/>
</dbReference>
<dbReference type="GO" id="GO:0032790">
    <property type="term" value="P:ribosome disassembly"/>
    <property type="evidence" value="ECO:0000318"/>
    <property type="project" value="GO_Central"/>
</dbReference>
<dbReference type="FunFam" id="3.10.20.80:FF:000001">
    <property type="entry name" value="Translation initiation factor IF-3"/>
    <property type="match status" value="1"/>
</dbReference>
<dbReference type="FunFam" id="3.30.110.10:FF:000001">
    <property type="entry name" value="Translation initiation factor IF-3"/>
    <property type="match status" value="1"/>
</dbReference>
<dbReference type="Gene3D" id="3.30.110.10">
    <property type="entry name" value="Translation initiation factor 3 (IF-3), C-terminal domain"/>
    <property type="match status" value="1"/>
</dbReference>
<dbReference type="Gene3D" id="3.10.20.80">
    <property type="entry name" value="Translation initiation factor 3 (IF-3), N-terminal domain"/>
    <property type="match status" value="1"/>
</dbReference>
<dbReference type="HAMAP" id="MF_00080">
    <property type="entry name" value="IF_3"/>
    <property type="match status" value="1"/>
</dbReference>
<dbReference type="InterPro" id="IPR036788">
    <property type="entry name" value="T_IF-3_C_sf"/>
</dbReference>
<dbReference type="InterPro" id="IPR036787">
    <property type="entry name" value="T_IF-3_N_sf"/>
</dbReference>
<dbReference type="InterPro" id="IPR019813">
    <property type="entry name" value="Translation_initiation_fac3_CS"/>
</dbReference>
<dbReference type="InterPro" id="IPR001288">
    <property type="entry name" value="Translation_initiation_fac_3"/>
</dbReference>
<dbReference type="InterPro" id="IPR019815">
    <property type="entry name" value="Translation_initiation_fac_3_C"/>
</dbReference>
<dbReference type="InterPro" id="IPR019814">
    <property type="entry name" value="Translation_initiation_fac_3_N"/>
</dbReference>
<dbReference type="NCBIfam" id="TIGR00168">
    <property type="entry name" value="infC"/>
    <property type="match status" value="1"/>
</dbReference>
<dbReference type="PANTHER" id="PTHR10938">
    <property type="entry name" value="TRANSLATION INITIATION FACTOR IF-3"/>
    <property type="match status" value="1"/>
</dbReference>
<dbReference type="PANTHER" id="PTHR10938:SF0">
    <property type="entry name" value="TRANSLATION INITIATION FACTOR IF-3, MITOCHONDRIAL"/>
    <property type="match status" value="1"/>
</dbReference>
<dbReference type="Pfam" id="PF00707">
    <property type="entry name" value="IF3_C"/>
    <property type="match status" value="1"/>
</dbReference>
<dbReference type="Pfam" id="PF05198">
    <property type="entry name" value="IF3_N"/>
    <property type="match status" value="1"/>
</dbReference>
<dbReference type="SUPFAM" id="SSF55200">
    <property type="entry name" value="Translation initiation factor IF3, C-terminal domain"/>
    <property type="match status" value="1"/>
</dbReference>
<dbReference type="SUPFAM" id="SSF54364">
    <property type="entry name" value="Translation initiation factor IF3, N-terminal domain"/>
    <property type="match status" value="1"/>
</dbReference>
<dbReference type="PROSITE" id="PS00938">
    <property type="entry name" value="IF3"/>
    <property type="match status" value="1"/>
</dbReference>
<proteinExistence type="inferred from homology"/>
<accession>Q8EER8</accession>
<organism>
    <name type="scientific">Shewanella oneidensis (strain ATCC 700550 / JCM 31522 / CIP 106686 / LMG 19005 / NCIMB 14063 / MR-1)</name>
    <dbReference type="NCBI Taxonomy" id="211586"/>
    <lineage>
        <taxon>Bacteria</taxon>
        <taxon>Pseudomonadati</taxon>
        <taxon>Pseudomonadota</taxon>
        <taxon>Gammaproteobacteria</taxon>
        <taxon>Alteromonadales</taxon>
        <taxon>Shewanellaceae</taxon>
        <taxon>Shewanella</taxon>
    </lineage>
</organism>
<protein>
    <recommendedName>
        <fullName evidence="1">Translation initiation factor IF-3</fullName>
    </recommendedName>
</protein>
<name>IF3_SHEON</name>
<sequence>MKIKKTAGRQLAPNRINEEITGVPEVRLTGIDGEAIGVVSIRDAQNLADEAGVDLVEISPNAEPPVCRIMDYGKFLFDKAKSAKEQKKKQKQVQVKEIKFRPGTDENDYQVKLRNLIRFLEDGDKAKITLRFRGREMAHQNLGMDLLNRIKTDLDEYAVVESFPKMEGRQAIMVLAPKKK</sequence>
<evidence type="ECO:0000255" key="1">
    <source>
        <dbReference type="HAMAP-Rule" id="MF_00080"/>
    </source>
</evidence>
<reference key="1">
    <citation type="journal article" date="2002" name="Nat. Biotechnol.">
        <title>Genome sequence of the dissimilatory metal ion-reducing bacterium Shewanella oneidensis.</title>
        <authorList>
            <person name="Heidelberg J.F."/>
            <person name="Paulsen I.T."/>
            <person name="Nelson K.E."/>
            <person name="Gaidos E.J."/>
            <person name="Nelson W.C."/>
            <person name="Read T.D."/>
            <person name="Eisen J.A."/>
            <person name="Seshadri R."/>
            <person name="Ward N.L."/>
            <person name="Methe B.A."/>
            <person name="Clayton R.A."/>
            <person name="Meyer T."/>
            <person name="Tsapin A."/>
            <person name="Scott J."/>
            <person name="Beanan M.J."/>
            <person name="Brinkac L.M."/>
            <person name="Daugherty S.C."/>
            <person name="DeBoy R.T."/>
            <person name="Dodson R.J."/>
            <person name="Durkin A.S."/>
            <person name="Haft D.H."/>
            <person name="Kolonay J.F."/>
            <person name="Madupu R."/>
            <person name="Peterson J.D."/>
            <person name="Umayam L.A."/>
            <person name="White O."/>
            <person name="Wolf A.M."/>
            <person name="Vamathevan J.J."/>
            <person name="Weidman J.F."/>
            <person name="Impraim M."/>
            <person name="Lee K."/>
            <person name="Berry K.J."/>
            <person name="Lee C."/>
            <person name="Mueller J."/>
            <person name="Khouri H.M."/>
            <person name="Gill J."/>
            <person name="Utterback T.R."/>
            <person name="McDonald L.A."/>
            <person name="Feldblyum T.V."/>
            <person name="Smith H.O."/>
            <person name="Venter J.C."/>
            <person name="Nealson K.H."/>
            <person name="Fraser C.M."/>
        </authorList>
    </citation>
    <scope>NUCLEOTIDE SEQUENCE [LARGE SCALE GENOMIC DNA]</scope>
    <source>
        <strain>ATCC 700550 / JCM 31522 / CIP 106686 / LMG 19005 / NCIMB 14063 / MR-1</strain>
    </source>
</reference>